<evidence type="ECO:0000250" key="1">
    <source>
        <dbReference type="UniProtKB" id="P68692"/>
    </source>
</evidence>
<evidence type="ECO:0000255" key="2">
    <source>
        <dbReference type="PROSITE-ProRule" id="PRU00686"/>
    </source>
</evidence>
<evidence type="ECO:0000305" key="3"/>
<gene>
    <name type="primary">OPG075</name>
    <name type="ORF">MPXVgp075</name>
</gene>
<sequence>MAEEFVQQRLANNKVTIFVKFTCPFCRNALDILNKFSFKRGAYEIVDIKEFKPENELRDYFEQITGGRTVPRIFFGKTSIGGYSDLLEIDNMDALGDILLSIGVLRTC</sequence>
<feature type="chain" id="PRO_0000457692" description="Glutaredoxin-1">
    <location>
        <begin position="1"/>
        <end position="108"/>
    </location>
</feature>
<feature type="domain" description="Glutaredoxin" evidence="2">
    <location>
        <begin position="3"/>
        <end position="106"/>
    </location>
</feature>
<feature type="disulfide bond" description="Redox-active" evidence="1">
    <location>
        <begin position="23"/>
        <end position="26"/>
    </location>
</feature>
<dbReference type="EMBL" id="KC257461">
    <property type="protein sequence ID" value="AGF36965.1"/>
    <property type="molecule type" value="Genomic_DNA"/>
</dbReference>
<dbReference type="EMBL" id="MT903340">
    <property type="protein sequence ID" value="QNP12931.1"/>
    <property type="molecule type" value="Genomic_DNA"/>
</dbReference>
<dbReference type="RefSeq" id="NP_536488.1">
    <property type="nucleotide sequence ID" value="NC_003310.1"/>
</dbReference>
<dbReference type="RefSeq" id="YP_010377058.1">
    <property type="nucleotide sequence ID" value="NC_063383.1"/>
</dbReference>
<dbReference type="SMR" id="A0A7H0DN48"/>
<dbReference type="GeneID" id="72551470"/>
<dbReference type="GeneID" id="929038"/>
<dbReference type="KEGG" id="vg:929038"/>
<dbReference type="Proteomes" id="UP000516359">
    <property type="component" value="Genome"/>
</dbReference>
<dbReference type="GO" id="GO:0044423">
    <property type="term" value="C:virion component"/>
    <property type="evidence" value="ECO:0007669"/>
    <property type="project" value="UniProtKB-KW"/>
</dbReference>
<dbReference type="GO" id="GO:0015038">
    <property type="term" value="F:glutathione disulfide oxidoreductase activity"/>
    <property type="evidence" value="ECO:0007669"/>
    <property type="project" value="TreeGrafter"/>
</dbReference>
<dbReference type="Gene3D" id="3.40.30.10">
    <property type="entry name" value="Glutaredoxin"/>
    <property type="match status" value="1"/>
</dbReference>
<dbReference type="InterPro" id="IPR011767">
    <property type="entry name" value="GLR_AS"/>
</dbReference>
<dbReference type="InterPro" id="IPR047185">
    <property type="entry name" value="GLRX1"/>
</dbReference>
<dbReference type="InterPro" id="IPR002109">
    <property type="entry name" value="Glutaredoxin"/>
</dbReference>
<dbReference type="InterPro" id="IPR011899">
    <property type="entry name" value="Glutaredoxin_euk/vir"/>
</dbReference>
<dbReference type="InterPro" id="IPR014025">
    <property type="entry name" value="Glutaredoxin_subgr"/>
</dbReference>
<dbReference type="InterPro" id="IPR036249">
    <property type="entry name" value="Thioredoxin-like_sf"/>
</dbReference>
<dbReference type="NCBIfam" id="TIGR02180">
    <property type="entry name" value="GRX_euk"/>
    <property type="match status" value="1"/>
</dbReference>
<dbReference type="PANTHER" id="PTHR46185">
    <property type="entry name" value="GLUTAREDOXIN-1"/>
    <property type="match status" value="1"/>
</dbReference>
<dbReference type="PANTHER" id="PTHR46185:SF1">
    <property type="entry name" value="GLUTAREDOXIN-1"/>
    <property type="match status" value="1"/>
</dbReference>
<dbReference type="Pfam" id="PF00462">
    <property type="entry name" value="Glutaredoxin"/>
    <property type="match status" value="1"/>
</dbReference>
<dbReference type="PRINTS" id="PR00160">
    <property type="entry name" value="GLUTAREDOXIN"/>
</dbReference>
<dbReference type="SUPFAM" id="SSF52833">
    <property type="entry name" value="Thioredoxin-like"/>
    <property type="match status" value="1"/>
</dbReference>
<dbReference type="PROSITE" id="PS00195">
    <property type="entry name" value="GLUTAREDOXIN_1"/>
    <property type="match status" value="1"/>
</dbReference>
<dbReference type="PROSITE" id="PS51354">
    <property type="entry name" value="GLUTAREDOXIN_2"/>
    <property type="match status" value="1"/>
</dbReference>
<name>GLRX1_MONPV</name>
<organismHost>
    <name type="scientific">Cynomys gunnisoni</name>
    <name type="common">Gunnison's prairie dog</name>
    <name type="synonym">Spermophilus gunnisoni</name>
    <dbReference type="NCBI Taxonomy" id="45479"/>
</organismHost>
<organismHost>
    <name type="scientific">Cynomys leucurus</name>
    <name type="common">White-tailed prairie dog</name>
    <dbReference type="NCBI Taxonomy" id="99825"/>
</organismHost>
<organismHost>
    <name type="scientific">Cynomys ludovicianus</name>
    <name type="common">Black-tailed prairie dog</name>
    <dbReference type="NCBI Taxonomy" id="45480"/>
</organismHost>
<organismHost>
    <name type="scientific">Cynomys mexicanus</name>
    <name type="common">Mexican prairie dog</name>
    <dbReference type="NCBI Taxonomy" id="99826"/>
</organismHost>
<organismHost>
    <name type="scientific">Cynomys parvidens</name>
    <name type="common">Utah prairie dog</name>
    <dbReference type="NCBI Taxonomy" id="99827"/>
</organismHost>
<organismHost>
    <name type="scientific">Gliridae</name>
    <name type="common">dormice</name>
    <dbReference type="NCBI Taxonomy" id="30650"/>
</organismHost>
<organismHost>
    <name type="scientific">Heliosciurus ruwenzorii</name>
    <name type="common">Ruwenzori sun squirrel</name>
    <dbReference type="NCBI Taxonomy" id="226685"/>
</organismHost>
<organismHost>
    <name type="scientific">Homo sapiens</name>
    <name type="common">Human</name>
    <dbReference type="NCBI Taxonomy" id="9606"/>
</organismHost>
<organismHost>
    <name type="scientific">Mus musculus</name>
    <name type="common">Mouse</name>
    <dbReference type="NCBI Taxonomy" id="10090"/>
</organismHost>
<organism>
    <name type="scientific">Monkeypox virus</name>
    <dbReference type="NCBI Taxonomy" id="10244"/>
    <lineage>
        <taxon>Viruses</taxon>
        <taxon>Varidnaviria</taxon>
        <taxon>Bamfordvirae</taxon>
        <taxon>Nucleocytoviricota</taxon>
        <taxon>Pokkesviricetes</taxon>
        <taxon>Chitovirales</taxon>
        <taxon>Poxviridae</taxon>
        <taxon>Chordopoxvirinae</taxon>
        <taxon>Orthopoxvirus</taxon>
    </lineage>
</organism>
<protein>
    <recommendedName>
        <fullName>Glutaredoxin-1</fullName>
    </recommendedName>
</protein>
<comment type="function">
    <text evidence="1">Displays thioltransferase and dehydroascorbate reductase activities.</text>
</comment>
<comment type="subcellular location">
    <subcellularLocation>
        <location evidence="1">Virion</location>
    </subcellularLocation>
    <text evidence="1">Localizes to the virion core.</text>
</comment>
<comment type="induction">
    <text evidence="1">Expressed in the intermediate phase of the viral replicative cycle.</text>
</comment>
<comment type="similarity">
    <text evidence="3">Belongs to the glutaredoxin family.</text>
</comment>
<reference key="1">
    <citation type="journal article" date="2013" name="Am. J. Trop. Med. Hyg.">
        <title>Detection of human monkeypox in the republic of the congo following intensive community education.</title>
        <authorList>
            <person name="Reynolds M.G."/>
            <person name="Emerson G.L."/>
            <person name="Pukuta E."/>
            <person name="Karhemere S."/>
            <person name="Muyembe J.J."/>
            <person name="Bikindou A."/>
            <person name="McCollum A.M."/>
            <person name="Moses C."/>
            <person name="Wilkins K."/>
            <person name="Zhao H."/>
            <person name="Damon I.K."/>
            <person name="Karem K.L."/>
            <person name="Li Y."/>
            <person name="Carroll D.S."/>
            <person name="Mombouli J.V."/>
        </authorList>
    </citation>
    <scope>NUCLEOTIDE SEQUENCE</scope>
    <source>
        <strain>ROC2010</strain>
    </source>
</reference>
<reference key="2">
    <citation type="journal article" date="2022" name="J. Infect. Dis.">
        <title>Exportation of Monkeypox virus from the African continent.</title>
        <authorList>
            <person name="Mauldin M.R."/>
            <person name="McCollum A.M."/>
            <person name="Nakazawa Y.J."/>
            <person name="Mandra A."/>
            <person name="Whitehouse E.R."/>
            <person name="Davidson W."/>
            <person name="Zhao H."/>
            <person name="Gao J."/>
            <person name="Li Y."/>
            <person name="Doty J."/>
            <person name="Yinka-Ogunleye A."/>
            <person name="Akinpelu A."/>
            <person name="Aruna O."/>
            <person name="Naidoo D."/>
            <person name="Lewandowski K."/>
            <person name="Afrough B."/>
            <person name="Graham V."/>
            <person name="Aarons E."/>
            <person name="Hewson R."/>
            <person name="Vipond R."/>
            <person name="Dunning J."/>
            <person name="Chand M."/>
            <person name="Brown C."/>
            <person name="Cohen-Gihon I."/>
            <person name="Erez N."/>
            <person name="Shifman O."/>
            <person name="Israeli O."/>
            <person name="Sharon M."/>
            <person name="Schwartz E."/>
            <person name="Beth-Din A."/>
            <person name="Zvi A."/>
            <person name="Mak T.M."/>
            <person name="Ng Y.K."/>
            <person name="Cui L."/>
            <person name="Lin R.T.P."/>
            <person name="Olson V.A."/>
            <person name="Brooks T."/>
            <person name="Paran N."/>
            <person name="Ihekweazu C."/>
            <person name="Reynolds M.G."/>
        </authorList>
    </citation>
    <scope>NUCLEOTIDE SEQUENCE [LARGE SCALE GENOMIC DNA]</scope>
    <source>
        <strain>MPXV-M5312_HM12_Rivers</strain>
    </source>
</reference>
<keyword id="KW-1015">Disulfide bond</keyword>
<keyword id="KW-0249">Electron transport</keyword>
<keyword id="KW-0676">Redox-active center</keyword>
<keyword id="KW-1185">Reference proteome</keyword>
<keyword id="KW-0813">Transport</keyword>
<keyword id="KW-0946">Virion</keyword>
<proteinExistence type="inferred from homology"/>
<accession>A0A7H0DN48</accession>